<keyword id="KW-0028">Amino-acid biosynthesis</keyword>
<keyword id="KW-0378">Hydrolase</keyword>
<keyword id="KW-0460">Magnesium</keyword>
<keyword id="KW-0479">Metal-binding</keyword>
<keyword id="KW-0486">Methionine biosynthesis</keyword>
<reference key="1">
    <citation type="journal article" date="2009" name="Genome Biol.">
        <title>Genomic and genetic analyses of diversity and plant interactions of Pseudomonas fluorescens.</title>
        <authorList>
            <person name="Silby M.W."/>
            <person name="Cerdeno-Tarraga A.M."/>
            <person name="Vernikos G.S."/>
            <person name="Giddens S.R."/>
            <person name="Jackson R.W."/>
            <person name="Preston G.M."/>
            <person name="Zhang X.-X."/>
            <person name="Moon C.D."/>
            <person name="Gehrig S.M."/>
            <person name="Godfrey S.A.C."/>
            <person name="Knight C.G."/>
            <person name="Malone J.G."/>
            <person name="Robinson Z."/>
            <person name="Spiers A.J."/>
            <person name="Harris S."/>
            <person name="Challis G.L."/>
            <person name="Yaxley A.M."/>
            <person name="Harris D."/>
            <person name="Seeger K."/>
            <person name="Murphy L."/>
            <person name="Rutter S."/>
            <person name="Squares R."/>
            <person name="Quail M.A."/>
            <person name="Saunders E."/>
            <person name="Mavromatis K."/>
            <person name="Brettin T.S."/>
            <person name="Bentley S.D."/>
            <person name="Hothersall J."/>
            <person name="Stephens E."/>
            <person name="Thomas C.M."/>
            <person name="Parkhill J."/>
            <person name="Levy S.B."/>
            <person name="Rainey P.B."/>
            <person name="Thomson N.R."/>
        </authorList>
    </citation>
    <scope>NUCLEOTIDE SEQUENCE [LARGE SCALE GENOMIC DNA]</scope>
    <source>
        <strain>Pf0-1</strain>
    </source>
</reference>
<gene>
    <name evidence="1" type="primary">mtnC</name>
    <name type="ordered locus">Pfl01_1726</name>
</gene>
<feature type="chain" id="PRO_0000357390" description="Enolase-phosphatase E1">
    <location>
        <begin position="1"/>
        <end position="227"/>
    </location>
</feature>
<proteinExistence type="inferred from homology"/>
<dbReference type="EC" id="3.1.3.77" evidence="1"/>
<dbReference type="EMBL" id="CP000094">
    <property type="protein sequence ID" value="ABA73469.1"/>
    <property type="molecule type" value="Genomic_DNA"/>
</dbReference>
<dbReference type="RefSeq" id="WP_011333211.1">
    <property type="nucleotide sequence ID" value="NC_007492.2"/>
</dbReference>
<dbReference type="SMR" id="Q3KFI7"/>
<dbReference type="KEGG" id="pfo:Pfl01_1726"/>
<dbReference type="eggNOG" id="COG4229">
    <property type="taxonomic scope" value="Bacteria"/>
</dbReference>
<dbReference type="HOGENOM" id="CLU_023273_0_0_6"/>
<dbReference type="UniPathway" id="UPA00904">
    <property type="reaction ID" value="UER00876"/>
</dbReference>
<dbReference type="UniPathway" id="UPA00904">
    <property type="reaction ID" value="UER00877"/>
</dbReference>
<dbReference type="Proteomes" id="UP000002704">
    <property type="component" value="Chromosome"/>
</dbReference>
<dbReference type="GO" id="GO:0043715">
    <property type="term" value="F:2,3-diketo-5-methylthiopentyl-1-phosphate enolase activity"/>
    <property type="evidence" value="ECO:0007669"/>
    <property type="project" value="UniProtKB-UniRule"/>
</dbReference>
<dbReference type="GO" id="GO:0043716">
    <property type="term" value="F:2-hydroxy-3-keto-5-methylthiopentenyl-1-phosphate phosphatase activity"/>
    <property type="evidence" value="ECO:0007669"/>
    <property type="project" value="UniProtKB-UniRule"/>
</dbReference>
<dbReference type="GO" id="GO:0043874">
    <property type="term" value="F:acireductone synthase activity"/>
    <property type="evidence" value="ECO:0007669"/>
    <property type="project" value="UniProtKB-EC"/>
</dbReference>
<dbReference type="GO" id="GO:0000287">
    <property type="term" value="F:magnesium ion binding"/>
    <property type="evidence" value="ECO:0007669"/>
    <property type="project" value="UniProtKB-UniRule"/>
</dbReference>
<dbReference type="GO" id="GO:0019509">
    <property type="term" value="P:L-methionine salvage from methylthioadenosine"/>
    <property type="evidence" value="ECO:0007669"/>
    <property type="project" value="UniProtKB-UniRule"/>
</dbReference>
<dbReference type="CDD" id="cd01629">
    <property type="entry name" value="HAD_EP"/>
    <property type="match status" value="1"/>
</dbReference>
<dbReference type="FunFam" id="3.40.50.1000:FF:000079">
    <property type="entry name" value="Enolase-phosphatase E1"/>
    <property type="match status" value="1"/>
</dbReference>
<dbReference type="Gene3D" id="1.10.720.60">
    <property type="match status" value="1"/>
</dbReference>
<dbReference type="Gene3D" id="3.40.50.1000">
    <property type="entry name" value="HAD superfamily/HAD-like"/>
    <property type="match status" value="1"/>
</dbReference>
<dbReference type="HAMAP" id="MF_01681">
    <property type="entry name" value="Salvage_MtnC"/>
    <property type="match status" value="1"/>
</dbReference>
<dbReference type="InterPro" id="IPR023943">
    <property type="entry name" value="Enolase-ppase_E1"/>
</dbReference>
<dbReference type="InterPro" id="IPR036412">
    <property type="entry name" value="HAD-like_sf"/>
</dbReference>
<dbReference type="InterPro" id="IPR006439">
    <property type="entry name" value="HAD-SF_hydro_IA"/>
</dbReference>
<dbReference type="InterPro" id="IPR023214">
    <property type="entry name" value="HAD_sf"/>
</dbReference>
<dbReference type="NCBIfam" id="TIGR01691">
    <property type="entry name" value="enolase-ppase"/>
    <property type="match status" value="1"/>
</dbReference>
<dbReference type="NCBIfam" id="TIGR01549">
    <property type="entry name" value="HAD-SF-IA-v1"/>
    <property type="match status" value="1"/>
</dbReference>
<dbReference type="PANTHER" id="PTHR20371">
    <property type="entry name" value="ENOLASE-PHOSPHATASE E1"/>
    <property type="match status" value="1"/>
</dbReference>
<dbReference type="PANTHER" id="PTHR20371:SF1">
    <property type="entry name" value="ENOLASE-PHOSPHATASE E1"/>
    <property type="match status" value="1"/>
</dbReference>
<dbReference type="Pfam" id="PF00702">
    <property type="entry name" value="Hydrolase"/>
    <property type="match status" value="1"/>
</dbReference>
<dbReference type="PRINTS" id="PR00413">
    <property type="entry name" value="HADHALOGNASE"/>
</dbReference>
<dbReference type="SFLD" id="SFLDF00044">
    <property type="entry name" value="enolase-phosphatase"/>
    <property type="match status" value="1"/>
</dbReference>
<dbReference type="SFLD" id="SFLDS00003">
    <property type="entry name" value="Haloacid_Dehalogenase"/>
    <property type="match status" value="1"/>
</dbReference>
<dbReference type="SUPFAM" id="SSF56784">
    <property type="entry name" value="HAD-like"/>
    <property type="match status" value="1"/>
</dbReference>
<comment type="function">
    <text evidence="1">Bifunctional enzyme that catalyzes the enolization of 2,3-diketo-5-methylthiopentyl-1-phosphate (DK-MTP-1-P) into the intermediate 2-hydroxy-3-keto-5-methylthiopentenyl-1-phosphate (HK-MTPenyl-1-P), which is then dephosphorylated to form the acireductone 1,2-dihydroxy-3-keto-5-methylthiopentene (DHK-MTPene).</text>
</comment>
<comment type="catalytic activity">
    <reaction evidence="1">
        <text>5-methylsulfanyl-2,3-dioxopentyl phosphate + H2O = 1,2-dihydroxy-5-(methylsulfanyl)pent-1-en-3-one + phosphate</text>
        <dbReference type="Rhea" id="RHEA:21700"/>
        <dbReference type="ChEBI" id="CHEBI:15377"/>
        <dbReference type="ChEBI" id="CHEBI:43474"/>
        <dbReference type="ChEBI" id="CHEBI:49252"/>
        <dbReference type="ChEBI" id="CHEBI:58828"/>
        <dbReference type="EC" id="3.1.3.77"/>
    </reaction>
</comment>
<comment type="cofactor">
    <cofactor evidence="1">
        <name>Mg(2+)</name>
        <dbReference type="ChEBI" id="CHEBI:18420"/>
    </cofactor>
    <text evidence="1">Binds 1 Mg(2+) ion per subunit.</text>
</comment>
<comment type="pathway">
    <text evidence="1">Amino-acid biosynthesis; L-methionine biosynthesis via salvage pathway; L-methionine from S-methyl-5-thio-alpha-D-ribose 1-phosphate: step 3/6.</text>
</comment>
<comment type="pathway">
    <text evidence="1">Amino-acid biosynthesis; L-methionine biosynthesis via salvage pathway; L-methionine from S-methyl-5-thio-alpha-D-ribose 1-phosphate: step 4/6.</text>
</comment>
<comment type="subunit">
    <text evidence="1">Monomer.</text>
</comment>
<comment type="similarity">
    <text evidence="1">Belongs to the HAD-like hydrolase superfamily. MasA/MtnC family.</text>
</comment>
<organism>
    <name type="scientific">Pseudomonas fluorescens (strain Pf0-1)</name>
    <dbReference type="NCBI Taxonomy" id="205922"/>
    <lineage>
        <taxon>Bacteria</taxon>
        <taxon>Pseudomonadati</taxon>
        <taxon>Pseudomonadota</taxon>
        <taxon>Gammaproteobacteria</taxon>
        <taxon>Pseudomonadales</taxon>
        <taxon>Pseudomonadaceae</taxon>
        <taxon>Pseudomonas</taxon>
    </lineage>
</organism>
<protein>
    <recommendedName>
        <fullName evidence="1">Enolase-phosphatase E1</fullName>
        <ecNumber evidence="1">3.1.3.77</ecNumber>
    </recommendedName>
    <alternativeName>
        <fullName evidence="1">2,3-diketo-5-methylthio-1-phosphopentane phosphatase</fullName>
    </alternativeName>
</protein>
<sequence length="227" mass="24939">MSIKVILTDIEGTTSAVSFVFDVLFPYAAKHLPDFVRQNAQRADVAEQLDAVRRDSNEPQADVERVVEILLAWIAEDRKATPLKALQGMVWEQGYQAGQLKGHVYPDAVEALQRWHQAGYQLFVYSSGSIQAQKLIFGCSEAGDLTPLFSGYFDTTSGPKREPQSYTNIQQAIGVEPQEILFLSDIVQELDAAQSAGLQTCGLAREGGELEGHVTVDSFTGIEPEAF</sequence>
<accession>Q3KFI7</accession>
<name>MTNC_PSEPF</name>
<evidence type="ECO:0000255" key="1">
    <source>
        <dbReference type="HAMAP-Rule" id="MF_01681"/>
    </source>
</evidence>